<protein>
    <recommendedName>
        <fullName evidence="1">Succinyl-diaminopimelate desuccinylase</fullName>
        <shortName evidence="1">SDAP desuccinylase</shortName>
        <ecNumber evidence="1">3.5.1.18</ecNumber>
    </recommendedName>
    <alternativeName>
        <fullName evidence="1">N-succinyl-LL-2,6-diaminoheptanedioate amidohydrolase</fullName>
    </alternativeName>
</protein>
<sequence length="383" mass="42243">MDALEITQKLISYPTITPKECGIFEYIKSLFPHFKTLECGENGVKNLFLYRIFNPPKDHAEEKHAKENTKPLHFCFAGHIDVVPPGNHWQSDPFKPVIKEGFLYGRGAQDMKGGVGAFLSASLNFNPKTPFLLSILLTSDEEGPGIFGTRLMLEKLKEKDLLPHMAIVAEPTCEKVLGDSIKIGRRGSINGKLILKGVQGHVAYPQKCQNPIDTLASVLPLISGVNLDNGDEYFDPSKLVITNLHAGLGANNITPASVEIIFNARHSLKTTKESLKEYLEKVLKDLPYTLELESSSSPFITASHSKLTSVLKENILKTCHTTPLLNTKGGTSDARFFSAHGIEVVEFGVINDRIHAIDERVSLKELELLEKVFLGVLEGLSEA</sequence>
<feature type="chain" id="PRO_0000375586" description="Succinyl-diaminopimelate desuccinylase">
    <location>
        <begin position="1"/>
        <end position="383"/>
    </location>
</feature>
<feature type="active site" evidence="1">
    <location>
        <position position="81"/>
    </location>
</feature>
<feature type="active site" description="Proton acceptor" evidence="1">
    <location>
        <position position="141"/>
    </location>
</feature>
<feature type="binding site" evidence="1">
    <location>
        <position position="79"/>
    </location>
    <ligand>
        <name>Zn(2+)</name>
        <dbReference type="ChEBI" id="CHEBI:29105"/>
        <label>1</label>
    </ligand>
</feature>
<feature type="binding site" evidence="1">
    <location>
        <position position="110"/>
    </location>
    <ligand>
        <name>Zn(2+)</name>
        <dbReference type="ChEBI" id="CHEBI:29105"/>
        <label>1</label>
    </ligand>
</feature>
<feature type="binding site" evidence="1">
    <location>
        <position position="110"/>
    </location>
    <ligand>
        <name>Zn(2+)</name>
        <dbReference type="ChEBI" id="CHEBI:29105"/>
        <label>2</label>
    </ligand>
</feature>
<feature type="binding site" evidence="1">
    <location>
        <position position="142"/>
    </location>
    <ligand>
        <name>Zn(2+)</name>
        <dbReference type="ChEBI" id="CHEBI:29105"/>
        <label>2</label>
    </ligand>
</feature>
<feature type="binding site" evidence="1">
    <location>
        <position position="170"/>
    </location>
    <ligand>
        <name>Zn(2+)</name>
        <dbReference type="ChEBI" id="CHEBI:29105"/>
        <label>1</label>
    </ligand>
</feature>
<feature type="binding site" evidence="1">
    <location>
        <position position="355"/>
    </location>
    <ligand>
        <name>Zn(2+)</name>
        <dbReference type="ChEBI" id="CHEBI:29105"/>
        <label>2</label>
    </ligand>
</feature>
<feature type="sequence conflict" description="In Ref. 1; AAB63297." evidence="3" ref="1">
    <original>D</original>
    <variation>N</variation>
    <location>
        <position position="2"/>
    </location>
</feature>
<feature type="sequence conflict" description="In Ref. 1; AAB63297." evidence="3" ref="1">
    <original>H</original>
    <variation>A</variation>
    <location>
        <position position="33"/>
    </location>
</feature>
<feature type="sequence conflict" description="In Ref. 1; AAB63297." evidence="3" ref="1">
    <original>D</original>
    <variation>EHAEKE</variation>
    <location>
        <position position="58"/>
    </location>
</feature>
<feature type="sequence conflict" description="In Ref. 1; AAB63297." evidence="3" ref="1">
    <original>E</original>
    <variation>K</variation>
    <location>
        <position position="61"/>
    </location>
</feature>
<feature type="sequence conflict" description="In Ref. 1; AAB63297." evidence="3" ref="1">
    <original>T</original>
    <variation>V</variation>
    <location>
        <position position="69"/>
    </location>
</feature>
<feature type="sequence conflict" description="In Ref. 1; AAB63297." evidence="3" ref="1">
    <original>C</original>
    <variation>S</variation>
    <location>
        <position position="75"/>
    </location>
</feature>
<feature type="sequence conflict" description="In Ref. 1; AAB63297." evidence="3" ref="1">
    <original>NH</original>
    <variation>DN</variation>
    <location>
        <begin position="87"/>
        <end position="88"/>
    </location>
</feature>
<feature type="sequence conflict" description="In Ref. 1; AAB63297." evidence="3" ref="1">
    <original>V</original>
    <variation>I</variation>
    <location>
        <position position="97"/>
    </location>
</feature>
<feature type="sequence conflict" description="In Ref. 1; AAB63297." evidence="3" ref="1">
    <original>R</original>
    <variation>K</variation>
    <location>
        <position position="150"/>
    </location>
</feature>
<feature type="sequence conflict" description="In Ref. 1; AAB63297." evidence="3" ref="1">
    <original>K</original>
    <variation>R</variation>
    <location>
        <position position="192"/>
    </location>
</feature>
<feature type="sequence conflict" description="In Ref. 1; AAB63297." evidence="3" ref="1">
    <original>L</original>
    <variation>S</variation>
    <location>
        <position position="221"/>
    </location>
</feature>
<feature type="sequence conflict" description="In Ref. 1; AAB63297." evidence="3" ref="1">
    <original>N</original>
    <variation>H</variation>
    <location>
        <position position="226"/>
    </location>
</feature>
<feature type="sequence conflict" description="In Ref. 1; AAB63297." evidence="3" ref="1">
    <original>N</original>
    <variation>D</variation>
    <location>
        <position position="229"/>
    </location>
</feature>
<feature type="sequence conflict" description="In Ref. 1; AAB63297." evidence="3" ref="1">
    <original>I</original>
    <variation>V</variation>
    <location>
        <position position="241"/>
    </location>
</feature>
<feature type="sequence conflict" description="In Ref. 1; AAB63297." evidence="3" ref="1">
    <original>I</original>
    <variation>V</variation>
    <location>
        <position position="253"/>
    </location>
</feature>
<feature type="sequence conflict" description="In Ref. 1; AAB63297." evidence="3" ref="1">
    <original>A</original>
    <variation>G</variation>
    <location>
        <position position="256"/>
    </location>
</feature>
<feature type="sequence conflict" description="In Ref. 1; AAB63297." evidence="3" ref="1">
    <original>I</original>
    <variation>T</variation>
    <location>
        <position position="261"/>
    </location>
</feature>
<feature type="sequence conflict" description="In Ref. 1; AAB63297." evidence="3" ref="1">
    <original>Y</original>
    <variation>H</variation>
    <location>
        <position position="288"/>
    </location>
</feature>
<feature type="sequence conflict" description="In Ref. 1; AAB63297." evidence="3" ref="1">
    <original>H</original>
    <variation>R</variation>
    <location>
        <position position="320"/>
    </location>
</feature>
<name>DAPE_HELPY</name>
<proteinExistence type="inferred from homology"/>
<dbReference type="EC" id="3.5.1.18" evidence="1"/>
<dbReference type="EMBL" id="AF008565">
    <property type="protein sequence ID" value="AAB63297.1"/>
    <property type="molecule type" value="Genomic_DNA"/>
</dbReference>
<dbReference type="EMBL" id="AE000511">
    <property type="protein sequence ID" value="AAD07280.1"/>
    <property type="molecule type" value="Genomic_DNA"/>
</dbReference>
<dbReference type="PIR" id="D64546">
    <property type="entry name" value="D64546"/>
</dbReference>
<dbReference type="RefSeq" id="NP_207010.1">
    <property type="nucleotide sequence ID" value="NC_000915.1"/>
</dbReference>
<dbReference type="RefSeq" id="WP_000339189.1">
    <property type="nucleotide sequence ID" value="NC_018939.1"/>
</dbReference>
<dbReference type="SMR" id="O25002"/>
<dbReference type="DIP" id="DIP-3691N"/>
<dbReference type="FunCoup" id="O25002">
    <property type="interactions" value="268"/>
</dbReference>
<dbReference type="IntAct" id="O25002">
    <property type="interactions" value="1"/>
</dbReference>
<dbReference type="MINT" id="O25002"/>
<dbReference type="STRING" id="85962.HP_0212"/>
<dbReference type="PaxDb" id="85962-C694_01065"/>
<dbReference type="EnsemblBacteria" id="AAD07280">
    <property type="protein sequence ID" value="AAD07280"/>
    <property type="gene ID" value="HP_0212"/>
</dbReference>
<dbReference type="KEGG" id="heo:C694_01065"/>
<dbReference type="KEGG" id="hpy:HP_0212"/>
<dbReference type="PATRIC" id="fig|85962.47.peg.229"/>
<dbReference type="eggNOG" id="COG0624">
    <property type="taxonomic scope" value="Bacteria"/>
</dbReference>
<dbReference type="InParanoid" id="O25002"/>
<dbReference type="OrthoDB" id="5486471at2"/>
<dbReference type="PhylomeDB" id="O25002"/>
<dbReference type="BRENDA" id="3.5.1.18">
    <property type="organism ID" value="2604"/>
</dbReference>
<dbReference type="UniPathway" id="UPA00034">
    <property type="reaction ID" value="UER00021"/>
</dbReference>
<dbReference type="Proteomes" id="UP000000429">
    <property type="component" value="Chromosome"/>
</dbReference>
<dbReference type="GO" id="GO:0008777">
    <property type="term" value="F:acetylornithine deacetylase activity"/>
    <property type="evidence" value="ECO:0000318"/>
    <property type="project" value="GO_Central"/>
</dbReference>
<dbReference type="GO" id="GO:0046872">
    <property type="term" value="F:metal ion binding"/>
    <property type="evidence" value="ECO:0007669"/>
    <property type="project" value="UniProtKB-KW"/>
</dbReference>
<dbReference type="GO" id="GO:0009014">
    <property type="term" value="F:succinyl-diaminopimelate desuccinylase activity"/>
    <property type="evidence" value="ECO:0007669"/>
    <property type="project" value="UniProtKB-EC"/>
</dbReference>
<dbReference type="GO" id="GO:0019877">
    <property type="term" value="P:diaminopimelate biosynthetic process"/>
    <property type="evidence" value="ECO:0007669"/>
    <property type="project" value="UniProtKB-KW"/>
</dbReference>
<dbReference type="GO" id="GO:0006526">
    <property type="term" value="P:L-arginine biosynthetic process"/>
    <property type="evidence" value="ECO:0000318"/>
    <property type="project" value="GO_Central"/>
</dbReference>
<dbReference type="GO" id="GO:0009089">
    <property type="term" value="P:lysine biosynthetic process via diaminopimelate"/>
    <property type="evidence" value="ECO:0007669"/>
    <property type="project" value="UniProtKB-UniPathway"/>
</dbReference>
<dbReference type="CDD" id="cd03891">
    <property type="entry name" value="M20_DapE_proteobac"/>
    <property type="match status" value="1"/>
</dbReference>
<dbReference type="FunFam" id="3.30.70.360:FF:000011">
    <property type="entry name" value="Succinyl-diaminopimelate desuccinylase"/>
    <property type="match status" value="1"/>
</dbReference>
<dbReference type="FunFam" id="3.40.630.10:FF:000126">
    <property type="entry name" value="Succinyl-diaminopimelate desuccinylase"/>
    <property type="match status" value="1"/>
</dbReference>
<dbReference type="Gene3D" id="3.40.630.10">
    <property type="entry name" value="Zn peptidases"/>
    <property type="match status" value="2"/>
</dbReference>
<dbReference type="HAMAP" id="MF_01690">
    <property type="entry name" value="DapE"/>
    <property type="match status" value="1"/>
</dbReference>
<dbReference type="InterPro" id="IPR001261">
    <property type="entry name" value="ArgE/DapE_CS"/>
</dbReference>
<dbReference type="InterPro" id="IPR036264">
    <property type="entry name" value="Bact_exopeptidase_dim_dom"/>
</dbReference>
<dbReference type="InterPro" id="IPR005941">
    <property type="entry name" value="DapE_proteobac"/>
</dbReference>
<dbReference type="InterPro" id="IPR002933">
    <property type="entry name" value="Peptidase_M20"/>
</dbReference>
<dbReference type="InterPro" id="IPR011650">
    <property type="entry name" value="Peptidase_M20_dimer"/>
</dbReference>
<dbReference type="InterPro" id="IPR050072">
    <property type="entry name" value="Peptidase_M20A"/>
</dbReference>
<dbReference type="NCBIfam" id="TIGR01246">
    <property type="entry name" value="dapE_proteo"/>
    <property type="match status" value="1"/>
</dbReference>
<dbReference type="NCBIfam" id="NF009557">
    <property type="entry name" value="PRK13009.1"/>
    <property type="match status" value="1"/>
</dbReference>
<dbReference type="PANTHER" id="PTHR43808">
    <property type="entry name" value="ACETYLORNITHINE DEACETYLASE"/>
    <property type="match status" value="1"/>
</dbReference>
<dbReference type="PANTHER" id="PTHR43808:SF31">
    <property type="entry name" value="N-ACETYL-L-CITRULLINE DEACETYLASE"/>
    <property type="match status" value="1"/>
</dbReference>
<dbReference type="Pfam" id="PF07687">
    <property type="entry name" value="M20_dimer"/>
    <property type="match status" value="1"/>
</dbReference>
<dbReference type="Pfam" id="PF01546">
    <property type="entry name" value="Peptidase_M20"/>
    <property type="match status" value="1"/>
</dbReference>
<dbReference type="SUPFAM" id="SSF55031">
    <property type="entry name" value="Bacterial exopeptidase dimerisation domain"/>
    <property type="match status" value="1"/>
</dbReference>
<dbReference type="SUPFAM" id="SSF53187">
    <property type="entry name" value="Zn-dependent exopeptidases"/>
    <property type="match status" value="1"/>
</dbReference>
<dbReference type="PROSITE" id="PS00759">
    <property type="entry name" value="ARGE_DAPE_CPG2_2"/>
    <property type="match status" value="1"/>
</dbReference>
<evidence type="ECO:0000255" key="1">
    <source>
        <dbReference type="HAMAP-Rule" id="MF_01690"/>
    </source>
</evidence>
<evidence type="ECO:0000269" key="2">
    <source>
    </source>
</evidence>
<evidence type="ECO:0000305" key="3"/>
<reference key="1">
    <citation type="journal article" date="1997" name="Infect. Immun.">
        <title>Characterization of Helicobacter pylori dapE and construction of a conditionally lethal dapE mutant.</title>
        <authorList>
            <person name="Karita M."/>
            <person name="Etterbeek M.L."/>
            <person name="Forsyth M.H."/>
            <person name="Tummuru M.K.R."/>
            <person name="Blaser M.J."/>
        </authorList>
    </citation>
    <scope>NUCLEOTIDE SEQUENCE [GENOMIC DNA]</scope>
    <scope>FUNCTION</scope>
    <source>
        <strain>ATCC 49503 / 60190</strain>
    </source>
</reference>
<reference key="2">
    <citation type="journal article" date="1997" name="Nature">
        <title>The complete genome sequence of the gastric pathogen Helicobacter pylori.</title>
        <authorList>
            <person name="Tomb J.-F."/>
            <person name="White O."/>
            <person name="Kerlavage A.R."/>
            <person name="Clayton R.A."/>
            <person name="Sutton G.G."/>
            <person name="Fleischmann R.D."/>
            <person name="Ketchum K.A."/>
            <person name="Klenk H.-P."/>
            <person name="Gill S.R."/>
            <person name="Dougherty B.A."/>
            <person name="Nelson K.E."/>
            <person name="Quackenbush J."/>
            <person name="Zhou L."/>
            <person name="Kirkness E.F."/>
            <person name="Peterson S.N."/>
            <person name="Loftus B.J."/>
            <person name="Richardson D.L."/>
            <person name="Dodson R.J."/>
            <person name="Khalak H.G."/>
            <person name="Glodek A."/>
            <person name="McKenney K."/>
            <person name="FitzGerald L.M."/>
            <person name="Lee N."/>
            <person name="Adams M.D."/>
            <person name="Hickey E.K."/>
            <person name="Berg D.E."/>
            <person name="Gocayne J.D."/>
            <person name="Utterback T.R."/>
            <person name="Peterson J.D."/>
            <person name="Kelley J.M."/>
            <person name="Cotton M.D."/>
            <person name="Weidman J.F."/>
            <person name="Fujii C."/>
            <person name="Bowman C."/>
            <person name="Watthey L."/>
            <person name="Wallin E."/>
            <person name="Hayes W.S."/>
            <person name="Borodovsky M."/>
            <person name="Karp P.D."/>
            <person name="Smith H.O."/>
            <person name="Fraser C.M."/>
            <person name="Venter J.C."/>
        </authorList>
    </citation>
    <scope>NUCLEOTIDE SEQUENCE [LARGE SCALE GENOMIC DNA]</scope>
    <source>
        <strain>ATCC 700392 / 26695</strain>
    </source>
</reference>
<comment type="function">
    <text evidence="1 2">Catalyzes the hydrolysis of N-succinyl-L,L-diaminopimelic acid (SDAP), forming succinate and LL-2,6-diaminopimelate (DAP), an intermediate involved in the bacterial biosynthesis of lysine and meso-diaminopimelic acid, an essential component of bacterial cell walls.</text>
</comment>
<comment type="catalytic activity">
    <reaction evidence="1">
        <text>N-succinyl-(2S,6S)-2,6-diaminopimelate + H2O = (2S,6S)-2,6-diaminopimelate + succinate</text>
        <dbReference type="Rhea" id="RHEA:22608"/>
        <dbReference type="ChEBI" id="CHEBI:15377"/>
        <dbReference type="ChEBI" id="CHEBI:30031"/>
        <dbReference type="ChEBI" id="CHEBI:57609"/>
        <dbReference type="ChEBI" id="CHEBI:58087"/>
        <dbReference type="EC" id="3.5.1.18"/>
    </reaction>
</comment>
<comment type="cofactor">
    <cofactor evidence="1">
        <name>Zn(2+)</name>
        <dbReference type="ChEBI" id="CHEBI:29105"/>
    </cofactor>
    <cofactor evidence="1">
        <name>Co(2+)</name>
        <dbReference type="ChEBI" id="CHEBI:48828"/>
    </cofactor>
    <text evidence="1">Binds 2 Zn(2+) or Co(2+) ions per subunit.</text>
</comment>
<comment type="pathway">
    <text evidence="1">Amino-acid biosynthesis; L-lysine biosynthesis via DAP pathway; LL-2,6-diaminopimelate from (S)-tetrahydrodipicolinate (succinylase route): step 3/3.</text>
</comment>
<comment type="subunit">
    <text evidence="1">Homodimer.</text>
</comment>
<comment type="similarity">
    <text evidence="1">Belongs to the peptidase M20A family. DapE subfamily.</text>
</comment>
<gene>
    <name evidence="1" type="primary">dapE</name>
    <name type="ordered locus">HP_0212</name>
</gene>
<accession>O25002</accession>
<accession>O32633</accession>
<keyword id="KW-0028">Amino-acid biosynthesis</keyword>
<keyword id="KW-0170">Cobalt</keyword>
<keyword id="KW-0220">Diaminopimelate biosynthesis</keyword>
<keyword id="KW-0378">Hydrolase</keyword>
<keyword id="KW-0457">Lysine biosynthesis</keyword>
<keyword id="KW-0479">Metal-binding</keyword>
<keyword id="KW-1185">Reference proteome</keyword>
<keyword id="KW-0862">Zinc</keyword>
<organism>
    <name type="scientific">Helicobacter pylori (strain ATCC 700392 / 26695)</name>
    <name type="common">Campylobacter pylori</name>
    <dbReference type="NCBI Taxonomy" id="85962"/>
    <lineage>
        <taxon>Bacteria</taxon>
        <taxon>Pseudomonadati</taxon>
        <taxon>Campylobacterota</taxon>
        <taxon>Epsilonproteobacteria</taxon>
        <taxon>Campylobacterales</taxon>
        <taxon>Helicobacteraceae</taxon>
        <taxon>Helicobacter</taxon>
    </lineage>
</organism>